<reference key="1">
    <citation type="submission" date="2007-03" db="EMBL/GenBank/DDBJ databases">
        <title>Complete sequence of Desulfotomaculum reducens MI-1.</title>
        <authorList>
            <consortium name="US DOE Joint Genome Institute"/>
            <person name="Copeland A."/>
            <person name="Lucas S."/>
            <person name="Lapidus A."/>
            <person name="Barry K."/>
            <person name="Detter J.C."/>
            <person name="Glavina del Rio T."/>
            <person name="Hammon N."/>
            <person name="Israni S."/>
            <person name="Dalin E."/>
            <person name="Tice H."/>
            <person name="Pitluck S."/>
            <person name="Sims D."/>
            <person name="Brettin T."/>
            <person name="Bruce D."/>
            <person name="Han C."/>
            <person name="Tapia R."/>
            <person name="Schmutz J."/>
            <person name="Larimer F."/>
            <person name="Land M."/>
            <person name="Hauser L."/>
            <person name="Kyrpides N."/>
            <person name="Kim E."/>
            <person name="Tebo B.M."/>
            <person name="Richardson P."/>
        </authorList>
    </citation>
    <scope>NUCLEOTIDE SEQUENCE [LARGE SCALE GENOMIC DNA]</scope>
    <source>
        <strain>ATCC BAA-1160 / DSM 100696 / MI-1</strain>
    </source>
</reference>
<proteinExistence type="inferred from homology"/>
<evidence type="ECO:0000255" key="1">
    <source>
        <dbReference type="HAMAP-Rule" id="MF_00184"/>
    </source>
</evidence>
<evidence type="ECO:0000255" key="2">
    <source>
        <dbReference type="PROSITE-ProRule" id="PRU01228"/>
    </source>
</evidence>
<keyword id="KW-0030">Aminoacyl-tRNA synthetase</keyword>
<keyword id="KW-0067">ATP-binding</keyword>
<keyword id="KW-0963">Cytoplasm</keyword>
<keyword id="KW-0436">Ligase</keyword>
<keyword id="KW-0479">Metal-binding</keyword>
<keyword id="KW-0547">Nucleotide-binding</keyword>
<keyword id="KW-0648">Protein biosynthesis</keyword>
<keyword id="KW-1185">Reference proteome</keyword>
<keyword id="KW-0694">RNA-binding</keyword>
<keyword id="KW-0820">tRNA-binding</keyword>
<keyword id="KW-0862">Zinc</keyword>
<organism>
    <name type="scientific">Desulforamulus reducens (strain ATCC BAA-1160 / DSM 100696 / MI-1)</name>
    <name type="common">Desulfotomaculum reducens</name>
    <dbReference type="NCBI Taxonomy" id="349161"/>
    <lineage>
        <taxon>Bacteria</taxon>
        <taxon>Bacillati</taxon>
        <taxon>Bacillota</taxon>
        <taxon>Clostridia</taxon>
        <taxon>Eubacteriales</taxon>
        <taxon>Peptococcaceae</taxon>
        <taxon>Desulforamulus</taxon>
    </lineage>
</organism>
<gene>
    <name evidence="1" type="primary">thrS</name>
    <name type="ordered locus">Dred_1612</name>
</gene>
<sequence>MIKITLKDGSVREYAVGTTVLEVAKSISQGLAREALAGKVNGKIVDLEYPLKEDAALELLTFNDEEGKTVYRHSTAHVLAQAVKRLFPDAKLAIGPAIQDGYYYDFDVEQPFTPAQLERIEEEMNKIIKEDIPFKRVELSREEALEHFKKQDEIYKIELITDLPEDAVISCYQQGDFDDLCAGPHVPSTGRLKSLKLMSIAGAYWRGSEKNKMLQRIYGTSFPKKAMLDEHLFRIEEAKRRDHRKLGQELDLFSIQEEGPGFPFFHPKGMVLRNELENFWRQEHKKRGYQEIRTPIILNRSMWEQSGHWAHYKDNMYFTKIDEADYAVKPMNCPGSILVYKTRMHSYRDLPLRWGELGLVHRHELSGALHGLMRVRCFTQDDAHIFMLPSQIKDEIIGVIDLFDYFYNTFGLNYHVELSTRPEKSMGSDEMWEVATNSLRDALEAKKMDYKVNEGDGAFYGPKIDFHLTDSLGRTWQCGTIQLDFQMPERFNLNYVGEDGQKHRPVMIHRVVFGSIERFIGILTEHFAGAFPVWLAPVQVKVLPITDRHHEYARELVKRLQGLDIRVELDARNEKINYKIREAQTQKIPYMLVIGDREMEQGAVAVRERGKGDVGAISVGDFIKKIEDDIQNKTI</sequence>
<comment type="function">
    <text evidence="1">Catalyzes the attachment of threonine to tRNA(Thr) in a two-step reaction: L-threonine is first activated by ATP to form Thr-AMP and then transferred to the acceptor end of tRNA(Thr). Also edits incorrectly charged L-seryl-tRNA(Thr).</text>
</comment>
<comment type="catalytic activity">
    <reaction evidence="1">
        <text>tRNA(Thr) + L-threonine + ATP = L-threonyl-tRNA(Thr) + AMP + diphosphate + H(+)</text>
        <dbReference type="Rhea" id="RHEA:24624"/>
        <dbReference type="Rhea" id="RHEA-COMP:9670"/>
        <dbReference type="Rhea" id="RHEA-COMP:9704"/>
        <dbReference type="ChEBI" id="CHEBI:15378"/>
        <dbReference type="ChEBI" id="CHEBI:30616"/>
        <dbReference type="ChEBI" id="CHEBI:33019"/>
        <dbReference type="ChEBI" id="CHEBI:57926"/>
        <dbReference type="ChEBI" id="CHEBI:78442"/>
        <dbReference type="ChEBI" id="CHEBI:78534"/>
        <dbReference type="ChEBI" id="CHEBI:456215"/>
        <dbReference type="EC" id="6.1.1.3"/>
    </reaction>
</comment>
<comment type="cofactor">
    <cofactor evidence="1">
        <name>Zn(2+)</name>
        <dbReference type="ChEBI" id="CHEBI:29105"/>
    </cofactor>
    <text evidence="1">Binds 1 zinc ion per subunit.</text>
</comment>
<comment type="subunit">
    <text evidence="1">Homodimer.</text>
</comment>
<comment type="subcellular location">
    <subcellularLocation>
        <location evidence="1">Cytoplasm</location>
    </subcellularLocation>
</comment>
<comment type="similarity">
    <text evidence="1">Belongs to the class-II aminoacyl-tRNA synthetase family.</text>
</comment>
<dbReference type="EC" id="6.1.1.3" evidence="1"/>
<dbReference type="EMBL" id="CP000612">
    <property type="protein sequence ID" value="ABO50140.1"/>
    <property type="molecule type" value="Genomic_DNA"/>
</dbReference>
<dbReference type="RefSeq" id="WP_011877956.1">
    <property type="nucleotide sequence ID" value="NC_009253.1"/>
</dbReference>
<dbReference type="SMR" id="A4J4Y7"/>
<dbReference type="STRING" id="349161.Dred_1612"/>
<dbReference type="KEGG" id="drm:Dred_1612"/>
<dbReference type="eggNOG" id="COG0441">
    <property type="taxonomic scope" value="Bacteria"/>
</dbReference>
<dbReference type="HOGENOM" id="CLU_008554_0_1_9"/>
<dbReference type="OrthoDB" id="9802304at2"/>
<dbReference type="Proteomes" id="UP000001556">
    <property type="component" value="Chromosome"/>
</dbReference>
<dbReference type="GO" id="GO:0005737">
    <property type="term" value="C:cytoplasm"/>
    <property type="evidence" value="ECO:0007669"/>
    <property type="project" value="UniProtKB-SubCell"/>
</dbReference>
<dbReference type="GO" id="GO:0005524">
    <property type="term" value="F:ATP binding"/>
    <property type="evidence" value="ECO:0007669"/>
    <property type="project" value="UniProtKB-UniRule"/>
</dbReference>
<dbReference type="GO" id="GO:0140096">
    <property type="term" value="F:catalytic activity, acting on a protein"/>
    <property type="evidence" value="ECO:0007669"/>
    <property type="project" value="UniProtKB-ARBA"/>
</dbReference>
<dbReference type="GO" id="GO:0046872">
    <property type="term" value="F:metal ion binding"/>
    <property type="evidence" value="ECO:0007669"/>
    <property type="project" value="UniProtKB-KW"/>
</dbReference>
<dbReference type="GO" id="GO:0004829">
    <property type="term" value="F:threonine-tRNA ligase activity"/>
    <property type="evidence" value="ECO:0007669"/>
    <property type="project" value="UniProtKB-UniRule"/>
</dbReference>
<dbReference type="GO" id="GO:0016740">
    <property type="term" value="F:transferase activity"/>
    <property type="evidence" value="ECO:0007669"/>
    <property type="project" value="UniProtKB-ARBA"/>
</dbReference>
<dbReference type="GO" id="GO:0000049">
    <property type="term" value="F:tRNA binding"/>
    <property type="evidence" value="ECO:0007669"/>
    <property type="project" value="UniProtKB-KW"/>
</dbReference>
<dbReference type="GO" id="GO:0006435">
    <property type="term" value="P:threonyl-tRNA aminoacylation"/>
    <property type="evidence" value="ECO:0007669"/>
    <property type="project" value="UniProtKB-UniRule"/>
</dbReference>
<dbReference type="CDD" id="cd01667">
    <property type="entry name" value="TGS_ThrRS"/>
    <property type="match status" value="1"/>
</dbReference>
<dbReference type="CDD" id="cd00860">
    <property type="entry name" value="ThrRS_anticodon"/>
    <property type="match status" value="1"/>
</dbReference>
<dbReference type="CDD" id="cd00771">
    <property type="entry name" value="ThrRS_core"/>
    <property type="match status" value="1"/>
</dbReference>
<dbReference type="FunFam" id="3.10.20.30:FF:000005">
    <property type="entry name" value="Threonine--tRNA ligase"/>
    <property type="match status" value="1"/>
</dbReference>
<dbReference type="FunFam" id="3.30.54.20:FF:000002">
    <property type="entry name" value="Threonine--tRNA ligase"/>
    <property type="match status" value="1"/>
</dbReference>
<dbReference type="FunFam" id="3.30.930.10:FF:000002">
    <property type="entry name" value="Threonine--tRNA ligase"/>
    <property type="match status" value="1"/>
</dbReference>
<dbReference type="FunFam" id="3.40.50.800:FF:000001">
    <property type="entry name" value="Threonine--tRNA ligase"/>
    <property type="match status" value="1"/>
</dbReference>
<dbReference type="FunFam" id="3.30.980.10:FF:000005">
    <property type="entry name" value="Threonyl-tRNA synthetase, mitochondrial"/>
    <property type="match status" value="1"/>
</dbReference>
<dbReference type="Gene3D" id="3.10.20.30">
    <property type="match status" value="1"/>
</dbReference>
<dbReference type="Gene3D" id="3.30.54.20">
    <property type="match status" value="1"/>
</dbReference>
<dbReference type="Gene3D" id="3.40.50.800">
    <property type="entry name" value="Anticodon-binding domain"/>
    <property type="match status" value="1"/>
</dbReference>
<dbReference type="Gene3D" id="3.30.930.10">
    <property type="entry name" value="Bira Bifunctional Protein, Domain 2"/>
    <property type="match status" value="1"/>
</dbReference>
<dbReference type="Gene3D" id="3.30.980.10">
    <property type="entry name" value="Threonyl-trna Synthetase, Chain A, domain 2"/>
    <property type="match status" value="1"/>
</dbReference>
<dbReference type="HAMAP" id="MF_00184">
    <property type="entry name" value="Thr_tRNA_synth"/>
    <property type="match status" value="1"/>
</dbReference>
<dbReference type="InterPro" id="IPR002314">
    <property type="entry name" value="aa-tRNA-synt_IIb"/>
</dbReference>
<dbReference type="InterPro" id="IPR006195">
    <property type="entry name" value="aa-tRNA-synth_II"/>
</dbReference>
<dbReference type="InterPro" id="IPR045864">
    <property type="entry name" value="aa-tRNA-synth_II/BPL/LPL"/>
</dbReference>
<dbReference type="InterPro" id="IPR004154">
    <property type="entry name" value="Anticodon-bd"/>
</dbReference>
<dbReference type="InterPro" id="IPR036621">
    <property type="entry name" value="Anticodon-bd_dom_sf"/>
</dbReference>
<dbReference type="InterPro" id="IPR012675">
    <property type="entry name" value="Beta-grasp_dom_sf"/>
</dbReference>
<dbReference type="InterPro" id="IPR004095">
    <property type="entry name" value="TGS"/>
</dbReference>
<dbReference type="InterPro" id="IPR012676">
    <property type="entry name" value="TGS-like"/>
</dbReference>
<dbReference type="InterPro" id="IPR002320">
    <property type="entry name" value="Thr-tRNA-ligase_IIa"/>
</dbReference>
<dbReference type="InterPro" id="IPR018163">
    <property type="entry name" value="Thr/Ala-tRNA-synth_IIc_edit"/>
</dbReference>
<dbReference type="InterPro" id="IPR047246">
    <property type="entry name" value="ThrRS_anticodon"/>
</dbReference>
<dbReference type="InterPro" id="IPR033728">
    <property type="entry name" value="ThrRS_core"/>
</dbReference>
<dbReference type="InterPro" id="IPR012947">
    <property type="entry name" value="tRNA_SAD"/>
</dbReference>
<dbReference type="NCBIfam" id="TIGR00418">
    <property type="entry name" value="thrS"/>
    <property type="match status" value="1"/>
</dbReference>
<dbReference type="PANTHER" id="PTHR11451:SF44">
    <property type="entry name" value="THREONINE--TRNA LIGASE, CHLOROPLASTIC_MITOCHONDRIAL 2"/>
    <property type="match status" value="1"/>
</dbReference>
<dbReference type="PANTHER" id="PTHR11451">
    <property type="entry name" value="THREONINE-TRNA LIGASE"/>
    <property type="match status" value="1"/>
</dbReference>
<dbReference type="Pfam" id="PF03129">
    <property type="entry name" value="HGTP_anticodon"/>
    <property type="match status" value="1"/>
</dbReference>
<dbReference type="Pfam" id="PF02824">
    <property type="entry name" value="TGS"/>
    <property type="match status" value="1"/>
</dbReference>
<dbReference type="Pfam" id="PF00587">
    <property type="entry name" value="tRNA-synt_2b"/>
    <property type="match status" value="1"/>
</dbReference>
<dbReference type="Pfam" id="PF07973">
    <property type="entry name" value="tRNA_SAD"/>
    <property type="match status" value="1"/>
</dbReference>
<dbReference type="PRINTS" id="PR01047">
    <property type="entry name" value="TRNASYNTHTHR"/>
</dbReference>
<dbReference type="SMART" id="SM00863">
    <property type="entry name" value="tRNA_SAD"/>
    <property type="match status" value="1"/>
</dbReference>
<dbReference type="SUPFAM" id="SSF52954">
    <property type="entry name" value="Class II aaRS ABD-related"/>
    <property type="match status" value="1"/>
</dbReference>
<dbReference type="SUPFAM" id="SSF55681">
    <property type="entry name" value="Class II aaRS and biotin synthetases"/>
    <property type="match status" value="1"/>
</dbReference>
<dbReference type="SUPFAM" id="SSF81271">
    <property type="entry name" value="TGS-like"/>
    <property type="match status" value="1"/>
</dbReference>
<dbReference type="SUPFAM" id="SSF55186">
    <property type="entry name" value="ThrRS/AlaRS common domain"/>
    <property type="match status" value="1"/>
</dbReference>
<dbReference type="PROSITE" id="PS50862">
    <property type="entry name" value="AA_TRNA_LIGASE_II"/>
    <property type="match status" value="1"/>
</dbReference>
<dbReference type="PROSITE" id="PS51880">
    <property type="entry name" value="TGS"/>
    <property type="match status" value="1"/>
</dbReference>
<protein>
    <recommendedName>
        <fullName evidence="1">Threonine--tRNA ligase</fullName>
        <ecNumber evidence="1">6.1.1.3</ecNumber>
    </recommendedName>
    <alternativeName>
        <fullName evidence="1">Threonyl-tRNA synthetase</fullName>
        <shortName evidence="1">ThrRS</shortName>
    </alternativeName>
</protein>
<name>SYT_DESRM</name>
<accession>A4J4Y7</accession>
<feature type="chain" id="PRO_1000077355" description="Threonine--tRNA ligase">
    <location>
        <begin position="1"/>
        <end position="635"/>
    </location>
</feature>
<feature type="domain" description="TGS" evidence="2">
    <location>
        <begin position="1"/>
        <end position="61"/>
    </location>
</feature>
<feature type="region of interest" description="Catalytic" evidence="1">
    <location>
        <begin position="242"/>
        <end position="532"/>
    </location>
</feature>
<feature type="binding site" evidence="1">
    <location>
        <position position="333"/>
    </location>
    <ligand>
        <name>Zn(2+)</name>
        <dbReference type="ChEBI" id="CHEBI:29105"/>
    </ligand>
</feature>
<feature type="binding site" evidence="1">
    <location>
        <position position="384"/>
    </location>
    <ligand>
        <name>Zn(2+)</name>
        <dbReference type="ChEBI" id="CHEBI:29105"/>
    </ligand>
</feature>
<feature type="binding site" evidence="1">
    <location>
        <position position="509"/>
    </location>
    <ligand>
        <name>Zn(2+)</name>
        <dbReference type="ChEBI" id="CHEBI:29105"/>
    </ligand>
</feature>